<accession>Q02827</accession>
<accession>Q3SZR4</accession>
<keyword id="KW-0002">3D-structure</keyword>
<keyword id="KW-0007">Acetylation</keyword>
<keyword id="KW-0903">Direct protein sequencing</keyword>
<keyword id="KW-0249">Electron transport</keyword>
<keyword id="KW-0472">Membrane</keyword>
<keyword id="KW-0496">Mitochondrion</keyword>
<keyword id="KW-0999">Mitochondrion inner membrane</keyword>
<keyword id="KW-1185">Reference proteome</keyword>
<keyword id="KW-0679">Respiratory chain</keyword>
<keyword id="KW-0812">Transmembrane</keyword>
<keyword id="KW-1133">Transmembrane helix</keyword>
<keyword id="KW-0813">Transport</keyword>
<organism>
    <name type="scientific">Bos taurus</name>
    <name type="common">Bovine</name>
    <dbReference type="NCBI Taxonomy" id="9913"/>
    <lineage>
        <taxon>Eukaryota</taxon>
        <taxon>Metazoa</taxon>
        <taxon>Chordata</taxon>
        <taxon>Craniata</taxon>
        <taxon>Vertebrata</taxon>
        <taxon>Euteleostomi</taxon>
        <taxon>Mammalia</taxon>
        <taxon>Eutheria</taxon>
        <taxon>Laurasiatheria</taxon>
        <taxon>Artiodactyla</taxon>
        <taxon>Ruminantia</taxon>
        <taxon>Pecora</taxon>
        <taxon>Bovidae</taxon>
        <taxon>Bovinae</taxon>
        <taxon>Bos</taxon>
    </lineage>
</organism>
<name>NDUC2_BOVIN</name>
<dbReference type="EMBL" id="X68647">
    <property type="protein sequence ID" value="CAA48607.1"/>
    <property type="molecule type" value="mRNA"/>
</dbReference>
<dbReference type="EMBL" id="BC102739">
    <property type="protein sequence ID" value="AAI02740.1"/>
    <property type="molecule type" value="mRNA"/>
</dbReference>
<dbReference type="PIR" id="S27227">
    <property type="entry name" value="S27227"/>
</dbReference>
<dbReference type="RefSeq" id="NP_788815.1">
    <property type="nucleotide sequence ID" value="NM_176642.3"/>
</dbReference>
<dbReference type="PDB" id="5LC5">
    <property type="method" value="EM"/>
    <property type="resolution" value="4.35 A"/>
    <property type="chains" value="d=29-97"/>
</dbReference>
<dbReference type="PDB" id="5LDW">
    <property type="method" value="EM"/>
    <property type="resolution" value="4.27 A"/>
    <property type="chains" value="d=29-96"/>
</dbReference>
<dbReference type="PDB" id="5LDX">
    <property type="method" value="EM"/>
    <property type="resolution" value="5.60 A"/>
    <property type="chains" value="d=29-97"/>
</dbReference>
<dbReference type="PDB" id="5O31">
    <property type="method" value="EM"/>
    <property type="resolution" value="4.13 A"/>
    <property type="chains" value="d=1-97"/>
</dbReference>
<dbReference type="PDB" id="7DGQ">
    <property type="method" value="EM"/>
    <property type="resolution" value="5.00 A"/>
    <property type="chains" value="j=1-120"/>
</dbReference>
<dbReference type="PDB" id="7DGR">
    <property type="method" value="EM"/>
    <property type="resolution" value="4.60 A"/>
    <property type="chains" value="j=1-120"/>
</dbReference>
<dbReference type="PDB" id="7DGS">
    <property type="method" value="EM"/>
    <property type="resolution" value="7.80 A"/>
    <property type="chains" value="j=1-120"/>
</dbReference>
<dbReference type="PDB" id="7DGZ">
    <property type="method" value="EM"/>
    <property type="resolution" value="3.80 A"/>
    <property type="chains" value="j=1-120"/>
</dbReference>
<dbReference type="PDB" id="7DH0">
    <property type="method" value="EM"/>
    <property type="resolution" value="4.20 A"/>
    <property type="chains" value="j=1-120"/>
</dbReference>
<dbReference type="PDB" id="7DKF">
    <property type="method" value="EM"/>
    <property type="resolution" value="8.30 A"/>
    <property type="chains" value="j2=1-120"/>
</dbReference>
<dbReference type="PDB" id="7QSD">
    <property type="method" value="EM"/>
    <property type="resolution" value="3.10 A"/>
    <property type="chains" value="d=1-120"/>
</dbReference>
<dbReference type="PDB" id="7QSK">
    <property type="method" value="EM"/>
    <property type="resolution" value="2.84 A"/>
    <property type="chains" value="d=1-120"/>
</dbReference>
<dbReference type="PDB" id="7QSL">
    <property type="method" value="EM"/>
    <property type="resolution" value="2.76 A"/>
    <property type="chains" value="d=1-120"/>
</dbReference>
<dbReference type="PDB" id="7QSM">
    <property type="method" value="EM"/>
    <property type="resolution" value="2.30 A"/>
    <property type="chains" value="d=1-120"/>
</dbReference>
<dbReference type="PDB" id="7QSN">
    <property type="method" value="EM"/>
    <property type="resolution" value="2.81 A"/>
    <property type="chains" value="d=1-120"/>
</dbReference>
<dbReference type="PDB" id="7QSO">
    <property type="method" value="EM"/>
    <property type="resolution" value="3.02 A"/>
    <property type="chains" value="d=1-120"/>
</dbReference>
<dbReference type="PDB" id="7R41">
    <property type="method" value="EM"/>
    <property type="resolution" value="2.30 A"/>
    <property type="chains" value="d=1-120"/>
</dbReference>
<dbReference type="PDB" id="7R42">
    <property type="method" value="EM"/>
    <property type="resolution" value="2.30 A"/>
    <property type="chains" value="d=1-120"/>
</dbReference>
<dbReference type="PDB" id="7R43">
    <property type="method" value="EM"/>
    <property type="resolution" value="2.40 A"/>
    <property type="chains" value="d=1-120"/>
</dbReference>
<dbReference type="PDB" id="7R44">
    <property type="method" value="EM"/>
    <property type="resolution" value="2.40 A"/>
    <property type="chains" value="d=1-120"/>
</dbReference>
<dbReference type="PDB" id="7R45">
    <property type="method" value="EM"/>
    <property type="resolution" value="2.40 A"/>
    <property type="chains" value="d=1-120"/>
</dbReference>
<dbReference type="PDB" id="7R46">
    <property type="method" value="EM"/>
    <property type="resolution" value="2.40 A"/>
    <property type="chains" value="d=1-120"/>
</dbReference>
<dbReference type="PDB" id="7R47">
    <property type="method" value="EM"/>
    <property type="resolution" value="2.30 A"/>
    <property type="chains" value="d=1-120"/>
</dbReference>
<dbReference type="PDB" id="7R48">
    <property type="method" value="EM"/>
    <property type="resolution" value="2.30 A"/>
    <property type="chains" value="d=1-120"/>
</dbReference>
<dbReference type="PDB" id="7R4C">
    <property type="method" value="EM"/>
    <property type="resolution" value="2.30 A"/>
    <property type="chains" value="d=1-120"/>
</dbReference>
<dbReference type="PDB" id="7R4D">
    <property type="method" value="EM"/>
    <property type="resolution" value="2.30 A"/>
    <property type="chains" value="d=1-120"/>
</dbReference>
<dbReference type="PDB" id="7R4F">
    <property type="method" value="EM"/>
    <property type="resolution" value="2.40 A"/>
    <property type="chains" value="d=1-120"/>
</dbReference>
<dbReference type="PDB" id="7R4G">
    <property type="method" value="EM"/>
    <property type="resolution" value="2.50 A"/>
    <property type="chains" value="d=1-120"/>
</dbReference>
<dbReference type="PDB" id="8Q0A">
    <property type="method" value="EM"/>
    <property type="resolution" value="3.10 A"/>
    <property type="chains" value="d=1-120"/>
</dbReference>
<dbReference type="PDB" id="8Q0F">
    <property type="method" value="EM"/>
    <property type="resolution" value="3.10 A"/>
    <property type="chains" value="d=1-120"/>
</dbReference>
<dbReference type="PDB" id="8Q0J">
    <property type="method" value="EM"/>
    <property type="resolution" value="3.80 A"/>
    <property type="chains" value="d=1-120"/>
</dbReference>
<dbReference type="PDB" id="8Q0M">
    <property type="method" value="EM"/>
    <property type="resolution" value="3.10 A"/>
    <property type="chains" value="d=1-120"/>
</dbReference>
<dbReference type="PDB" id="8Q0O">
    <property type="method" value="EM"/>
    <property type="resolution" value="3.10 A"/>
    <property type="chains" value="d=1-120"/>
</dbReference>
<dbReference type="PDB" id="8Q0Q">
    <property type="method" value="EM"/>
    <property type="resolution" value="3.60 A"/>
    <property type="chains" value="d=1-120"/>
</dbReference>
<dbReference type="PDB" id="8Q1P">
    <property type="method" value="EM"/>
    <property type="resolution" value="2.90 A"/>
    <property type="chains" value="d=1-120"/>
</dbReference>
<dbReference type="PDB" id="8Q1U">
    <property type="method" value="EM"/>
    <property type="resolution" value="3.30 A"/>
    <property type="chains" value="d=1-120"/>
</dbReference>
<dbReference type="PDB" id="8Q1Y">
    <property type="method" value="EM"/>
    <property type="resolution" value="2.60 A"/>
    <property type="chains" value="d=1-120"/>
</dbReference>
<dbReference type="PDB" id="8Q25">
    <property type="method" value="EM"/>
    <property type="resolution" value="2.80 A"/>
    <property type="chains" value="d=1-120"/>
</dbReference>
<dbReference type="PDB" id="8Q45">
    <property type="method" value="EM"/>
    <property type="resolution" value="2.70 A"/>
    <property type="chains" value="d=1-120"/>
</dbReference>
<dbReference type="PDB" id="8Q46">
    <property type="method" value="EM"/>
    <property type="resolution" value="2.60 A"/>
    <property type="chains" value="d=1-120"/>
</dbReference>
<dbReference type="PDB" id="8Q47">
    <property type="method" value="EM"/>
    <property type="resolution" value="2.90 A"/>
    <property type="chains" value="d=1-120"/>
</dbReference>
<dbReference type="PDB" id="8Q48">
    <property type="method" value="EM"/>
    <property type="resolution" value="2.50 A"/>
    <property type="chains" value="d=1-120"/>
</dbReference>
<dbReference type="PDB" id="8Q49">
    <property type="method" value="EM"/>
    <property type="resolution" value="2.60 A"/>
    <property type="chains" value="d=1-120"/>
</dbReference>
<dbReference type="PDB" id="8Q4A">
    <property type="method" value="EM"/>
    <property type="resolution" value="2.60 A"/>
    <property type="chains" value="d=1-120"/>
</dbReference>
<dbReference type="PDBsum" id="5LC5"/>
<dbReference type="PDBsum" id="5LDW"/>
<dbReference type="PDBsum" id="5LDX"/>
<dbReference type="PDBsum" id="5O31"/>
<dbReference type="PDBsum" id="7DGQ"/>
<dbReference type="PDBsum" id="7DGR"/>
<dbReference type="PDBsum" id="7DGS"/>
<dbReference type="PDBsum" id="7DGZ"/>
<dbReference type="PDBsum" id="7DH0"/>
<dbReference type="PDBsum" id="7DKF"/>
<dbReference type="PDBsum" id="7QSD"/>
<dbReference type="PDBsum" id="7QSK"/>
<dbReference type="PDBsum" id="7QSL"/>
<dbReference type="PDBsum" id="7QSM"/>
<dbReference type="PDBsum" id="7QSN"/>
<dbReference type="PDBsum" id="7QSO"/>
<dbReference type="PDBsum" id="7R41"/>
<dbReference type="PDBsum" id="7R42"/>
<dbReference type="PDBsum" id="7R43"/>
<dbReference type="PDBsum" id="7R44"/>
<dbReference type="PDBsum" id="7R45"/>
<dbReference type="PDBsum" id="7R46"/>
<dbReference type="PDBsum" id="7R47"/>
<dbReference type="PDBsum" id="7R48"/>
<dbReference type="PDBsum" id="7R4C"/>
<dbReference type="PDBsum" id="7R4D"/>
<dbReference type="PDBsum" id="7R4F"/>
<dbReference type="PDBsum" id="7R4G"/>
<dbReference type="PDBsum" id="8Q0A"/>
<dbReference type="PDBsum" id="8Q0F"/>
<dbReference type="PDBsum" id="8Q0J"/>
<dbReference type="PDBsum" id="8Q0M"/>
<dbReference type="PDBsum" id="8Q0O"/>
<dbReference type="PDBsum" id="8Q0Q"/>
<dbReference type="PDBsum" id="8Q1P"/>
<dbReference type="PDBsum" id="8Q1U"/>
<dbReference type="PDBsum" id="8Q1Y"/>
<dbReference type="PDBsum" id="8Q25"/>
<dbReference type="PDBsum" id="8Q45"/>
<dbReference type="PDBsum" id="8Q46"/>
<dbReference type="PDBsum" id="8Q47"/>
<dbReference type="PDBsum" id="8Q48"/>
<dbReference type="PDBsum" id="8Q49"/>
<dbReference type="PDBsum" id="8Q4A"/>
<dbReference type="EMDB" id="EMD-14127"/>
<dbReference type="EMDB" id="EMD-14132"/>
<dbReference type="EMDB" id="EMD-14133"/>
<dbReference type="EMDB" id="EMD-14134"/>
<dbReference type="EMDB" id="EMD-14139"/>
<dbReference type="EMDB" id="EMD-14140"/>
<dbReference type="EMDB" id="EMD-14251"/>
<dbReference type="EMDB" id="EMD-14256"/>
<dbReference type="EMDB" id="EMD-14261"/>
<dbReference type="EMDB" id="EMD-14266"/>
<dbReference type="EMDB" id="EMD-14272"/>
<dbReference type="EMDB" id="EMD-14277"/>
<dbReference type="EMDB" id="EMD-14282"/>
<dbReference type="EMDB" id="EMD-14287"/>
<dbReference type="EMDB" id="EMD-14292"/>
<dbReference type="EMDB" id="EMD-14297"/>
<dbReference type="EMDB" id="EMD-14302"/>
<dbReference type="EMDB" id="EMD-14307"/>
<dbReference type="EMDB" id="EMD-18051"/>
<dbReference type="EMDB" id="EMD-18052"/>
<dbReference type="EMDB" id="EMD-18054"/>
<dbReference type="EMDB" id="EMD-18055"/>
<dbReference type="EMDB" id="EMD-18057"/>
<dbReference type="EMDB" id="EMD-18059"/>
<dbReference type="EMDB" id="EMD-18066"/>
<dbReference type="EMDB" id="EMD-18067"/>
<dbReference type="EMDB" id="EMD-18068"/>
<dbReference type="EMDB" id="EMD-18069"/>
<dbReference type="EMDB" id="EMD-18138"/>
<dbReference type="EMDB" id="EMD-18139"/>
<dbReference type="EMDB" id="EMD-18140"/>
<dbReference type="EMDB" id="EMD-18141"/>
<dbReference type="EMDB" id="EMD-18142"/>
<dbReference type="EMDB" id="EMD-18143"/>
<dbReference type="EMDB" id="EMD-30673"/>
<dbReference type="EMDB" id="EMD-30674"/>
<dbReference type="EMDB" id="EMD-30675"/>
<dbReference type="EMDB" id="EMD-30676"/>
<dbReference type="EMDB" id="EMD-30677"/>
<dbReference type="EMDB" id="EMD-30706"/>
<dbReference type="EMDB" id="EMD-3731"/>
<dbReference type="EMDB" id="EMD-4032"/>
<dbReference type="EMDB" id="EMD-4040"/>
<dbReference type="EMDB" id="EMD-4041"/>
<dbReference type="SMR" id="Q02827"/>
<dbReference type="CORUM" id="Q02827"/>
<dbReference type="DIP" id="DIP-38794N"/>
<dbReference type="FunCoup" id="Q02827">
    <property type="interactions" value="1248"/>
</dbReference>
<dbReference type="IntAct" id="Q02827">
    <property type="interactions" value="1"/>
</dbReference>
<dbReference type="STRING" id="9913.ENSBTAP00000024209"/>
<dbReference type="TCDB" id="3.D.1.6.1">
    <property type="family name" value="the h+ or na+-translocating nadh dehydrogenase (ndh) family"/>
</dbReference>
<dbReference type="GlyGen" id="Q02827">
    <property type="glycosylation" value="1 site, 1 O-linked glycan (1 site)"/>
</dbReference>
<dbReference type="iPTMnet" id="Q02827"/>
<dbReference type="PaxDb" id="9913-ENSBTAP00000024209"/>
<dbReference type="GeneID" id="338046"/>
<dbReference type="KEGG" id="bta:338046"/>
<dbReference type="CTD" id="4718"/>
<dbReference type="VEuPathDB" id="HostDB:ENSBTAG00000018188"/>
<dbReference type="eggNOG" id="KOG4516">
    <property type="taxonomic scope" value="Eukaryota"/>
</dbReference>
<dbReference type="HOGENOM" id="CLU_156652_0_0_1"/>
<dbReference type="InParanoid" id="Q02827"/>
<dbReference type="OMA" id="WFIGYHI"/>
<dbReference type="OrthoDB" id="6329847at2759"/>
<dbReference type="TreeFam" id="TF314723"/>
<dbReference type="Reactome" id="R-BTA-611105">
    <property type="pathway name" value="Respiratory electron transport"/>
</dbReference>
<dbReference type="Reactome" id="R-BTA-6798695">
    <property type="pathway name" value="Neutrophil degranulation"/>
</dbReference>
<dbReference type="Reactome" id="R-BTA-6799198">
    <property type="pathway name" value="Complex I biogenesis"/>
</dbReference>
<dbReference type="Proteomes" id="UP000009136">
    <property type="component" value="Chromosome 29"/>
</dbReference>
<dbReference type="Bgee" id="ENSBTAG00000018188">
    <property type="expression patterns" value="Expressed in tongue muscle and 104 other cell types or tissues"/>
</dbReference>
<dbReference type="GO" id="GO:0005743">
    <property type="term" value="C:mitochondrial inner membrane"/>
    <property type="evidence" value="ECO:0007669"/>
    <property type="project" value="UniProtKB-SubCell"/>
</dbReference>
<dbReference type="GO" id="GO:0005739">
    <property type="term" value="C:mitochondrion"/>
    <property type="evidence" value="ECO:0000305"/>
    <property type="project" value="UniProtKB"/>
</dbReference>
<dbReference type="GO" id="GO:0045271">
    <property type="term" value="C:respiratory chain complex I"/>
    <property type="evidence" value="ECO:0000314"/>
    <property type="project" value="UniProtKB"/>
</dbReference>
<dbReference type="GO" id="GO:0006120">
    <property type="term" value="P:mitochondrial electron transport, NADH to ubiquinone"/>
    <property type="evidence" value="ECO:0007669"/>
    <property type="project" value="InterPro"/>
</dbReference>
<dbReference type="GO" id="GO:0032981">
    <property type="term" value="P:mitochondrial respiratory chain complex I assembly"/>
    <property type="evidence" value="ECO:0007669"/>
    <property type="project" value="Ensembl"/>
</dbReference>
<dbReference type="InterPro" id="IPR009423">
    <property type="entry name" value="NDUC2"/>
</dbReference>
<dbReference type="PANTHER" id="PTHR13099:SF0">
    <property type="entry name" value="NADH DEHYDROGENASE [UBIQUINONE] 1 SUBUNIT C2-RELATED"/>
    <property type="match status" value="1"/>
</dbReference>
<dbReference type="PANTHER" id="PTHR13099">
    <property type="entry name" value="NADH-UBIQUINONE OXIDOREDUCTASE SUBUNIT B14.5B"/>
    <property type="match status" value="1"/>
</dbReference>
<dbReference type="Pfam" id="PF06374">
    <property type="entry name" value="NDUF_C2"/>
    <property type="match status" value="1"/>
</dbReference>
<dbReference type="PIRSF" id="PIRSF017834">
    <property type="entry name" value="NADH-UbQ_OxRdtase_b14.5b"/>
    <property type="match status" value="1"/>
</dbReference>
<evidence type="ECO:0000250" key="1">
    <source>
        <dbReference type="UniProtKB" id="O95298"/>
    </source>
</evidence>
<evidence type="ECO:0000255" key="2"/>
<evidence type="ECO:0000269" key="3">
    <source>
    </source>
</evidence>
<evidence type="ECO:0000269" key="4">
    <source>
    </source>
</evidence>
<evidence type="ECO:0000305" key="5"/>
<evidence type="ECO:0000305" key="6">
    <source>
    </source>
</evidence>
<evidence type="ECO:0007829" key="7">
    <source>
        <dbReference type="PDB" id="7QSM"/>
    </source>
</evidence>
<evidence type="ECO:0007829" key="8">
    <source>
        <dbReference type="PDB" id="8Q1U"/>
    </source>
</evidence>
<proteinExistence type="evidence at protein level"/>
<protein>
    <recommendedName>
        <fullName evidence="1">NADH dehydrogenase [ubiquinone] 1 subunit C2</fullName>
    </recommendedName>
    <alternativeName>
        <fullName>Complex I-B14.5b</fullName>
        <shortName>CI-B14.5b</shortName>
    </alternativeName>
    <alternativeName>
        <fullName>NADH-ubiquinone oxidoreductase subunit B14.5b</fullName>
    </alternativeName>
</protein>
<gene>
    <name evidence="1" type="primary">NDUFC2</name>
</gene>
<feature type="chain" id="PRO_0000118836" description="NADH dehydrogenase [ubiquinone] 1 subunit C2">
    <location>
        <begin position="1"/>
        <end position="120"/>
    </location>
</feature>
<feature type="transmembrane region" description="Helical" evidence="2">
    <location>
        <begin position="57"/>
        <end position="76"/>
    </location>
</feature>
<feature type="modified residue" description="N-acetylmethionine" evidence="3">
    <location>
        <position position="1"/>
    </location>
</feature>
<feature type="turn" evidence="8">
    <location>
        <begin position="5"/>
        <end position="7"/>
    </location>
</feature>
<feature type="helix" evidence="7">
    <location>
        <begin position="16"/>
        <end position="20"/>
    </location>
</feature>
<feature type="helix" evidence="7">
    <location>
        <begin position="29"/>
        <end position="48"/>
    </location>
</feature>
<feature type="turn" evidence="7">
    <location>
        <begin position="53"/>
        <end position="55"/>
    </location>
</feature>
<feature type="helix" evidence="7">
    <location>
        <begin position="58"/>
        <end position="96"/>
    </location>
</feature>
<feature type="helix" evidence="7">
    <location>
        <begin position="98"/>
        <end position="100"/>
    </location>
</feature>
<feature type="turn" evidence="7">
    <location>
        <begin position="109"/>
        <end position="111"/>
    </location>
</feature>
<comment type="function">
    <text evidence="1">Accessory subunit of the mitochondrial membrane respiratory chain NADH dehydrogenase (Complex I), that is believed not to be involved in catalysis but required for the complex assembly. Complex I functions in the transfer of electrons from NADH to the respiratory chain. The immediate electron acceptor for the enzyme is believed to be ubiquinone.</text>
</comment>
<comment type="subunit">
    <text evidence="1 4">Complex I is composed of 45 different subunits. Interacts with TMEM242 (By similarity).</text>
</comment>
<comment type="subcellular location">
    <subcellularLocation>
        <location evidence="6">Mitochondrion inner membrane</location>
        <topology evidence="2">Single-pass membrane protein</topology>
        <orientation evidence="5">Matrix side</orientation>
    </subcellularLocation>
</comment>
<comment type="PTM">
    <text evidence="3">There is a minor unacetylated form of subunit B14.5b.</text>
</comment>
<comment type="similarity">
    <text evidence="5">Belongs to the complex I NDUFC2 subunit family.</text>
</comment>
<sequence>MMTGRQGRATFQFLPDEARSLPPPKLTDPRLAFVGFLGYCSGLIDNAIRRRPVLLAGLHRQLLYITSFVFVGYYLLKRQDYMYAVRDHDMFSYIKSHPEDFPEKDKKTYGEVFEEFHPVR</sequence>
<reference key="1">
    <citation type="journal article" date="1992" name="FEBS Lett.">
        <title>Complementary DNA sequences of two 14.5 kDa subunits of NADH:ubiquinone oxidoreductase from bovine heart mitochondria. Completion of the primary structure of the complex?</title>
        <authorList>
            <person name="Arizmendi J.M."/>
            <person name="Skehel J.M."/>
            <person name="Runswick M.J."/>
            <person name="Fearnley I.M."/>
            <person name="Walker J.E."/>
        </authorList>
    </citation>
    <scope>NUCLEOTIDE SEQUENCE [MRNA]</scope>
    <scope>PARTIAL PROTEIN SEQUENCE</scope>
    <scope>ACETYLATION AT MET-1</scope>
    <source>
        <tissue>Heart</tissue>
    </source>
</reference>
<reference key="2">
    <citation type="submission" date="2005-08" db="EMBL/GenBank/DDBJ databases">
        <authorList>
            <consortium name="NIH - Mammalian Gene Collection (MGC) project"/>
        </authorList>
    </citation>
    <scope>NUCLEOTIDE SEQUENCE [LARGE SCALE MRNA]</scope>
    <source>
        <strain>Hereford</strain>
        <tissue>Testis</tissue>
    </source>
</reference>
<reference key="3">
    <citation type="journal article" date="2008" name="Anal. Biochem.">
        <title>Subunit analysis of bovine heart complex I by reversed-phase high-performance liquid chromatography, electrospray ionization-tandem mass spectrometry, and matrix-assisted laser desorption/ionization-time-of-flight mass spectrometry.</title>
        <authorList>
            <person name="Lemma-Gray P."/>
            <person name="Valusova E."/>
            <person name="Carroll C.A."/>
            <person name="Weintraub S.T."/>
            <person name="Musatov A."/>
            <person name="Robinson N.C."/>
        </authorList>
    </citation>
    <scope>SUBUNIT</scope>
    <scope>IDENTIFICATION IN COMPLEX I</scope>
    <scope>SUBCELLULAR LOCATION</scope>
</reference>